<organism>
    <name type="scientific">Agrostis stolonifera</name>
    <name type="common">Creeping bentgrass</name>
    <dbReference type="NCBI Taxonomy" id="63632"/>
    <lineage>
        <taxon>Eukaryota</taxon>
        <taxon>Viridiplantae</taxon>
        <taxon>Streptophyta</taxon>
        <taxon>Embryophyta</taxon>
        <taxon>Tracheophyta</taxon>
        <taxon>Spermatophyta</taxon>
        <taxon>Magnoliopsida</taxon>
        <taxon>Liliopsida</taxon>
        <taxon>Poales</taxon>
        <taxon>Poaceae</taxon>
        <taxon>BOP clade</taxon>
        <taxon>Pooideae</taxon>
        <taxon>Poodae</taxon>
        <taxon>Poeae</taxon>
        <taxon>Poeae Chloroplast Group 1 (Aveneae type)</taxon>
        <taxon>Agrostidodinae</taxon>
        <taxon>Agrostidinae</taxon>
        <taxon>Agrostis</taxon>
    </lineage>
</organism>
<dbReference type="EC" id="7.1.1.-"/>
<dbReference type="EMBL" id="EF115543">
    <property type="protein sequence ID" value="ABK79628.1"/>
    <property type="molecule type" value="Genomic_DNA"/>
</dbReference>
<dbReference type="RefSeq" id="YP_874784.1">
    <property type="nucleotide sequence ID" value="NC_008591.1"/>
</dbReference>
<dbReference type="SMR" id="A1EA56"/>
<dbReference type="GeneID" id="4525032"/>
<dbReference type="GO" id="GO:0009535">
    <property type="term" value="C:chloroplast thylakoid membrane"/>
    <property type="evidence" value="ECO:0007669"/>
    <property type="project" value="UniProtKB-SubCell"/>
</dbReference>
<dbReference type="GO" id="GO:0008137">
    <property type="term" value="F:NADH dehydrogenase (ubiquinone) activity"/>
    <property type="evidence" value="ECO:0007669"/>
    <property type="project" value="InterPro"/>
</dbReference>
<dbReference type="GO" id="GO:0048038">
    <property type="term" value="F:quinone binding"/>
    <property type="evidence" value="ECO:0007669"/>
    <property type="project" value="UniProtKB-KW"/>
</dbReference>
<dbReference type="GO" id="GO:0042773">
    <property type="term" value="P:ATP synthesis coupled electron transport"/>
    <property type="evidence" value="ECO:0007669"/>
    <property type="project" value="InterPro"/>
</dbReference>
<dbReference type="GO" id="GO:0015990">
    <property type="term" value="P:electron transport coupled proton transport"/>
    <property type="evidence" value="ECO:0007669"/>
    <property type="project" value="TreeGrafter"/>
</dbReference>
<dbReference type="Gene3D" id="1.20.5.2700">
    <property type="match status" value="1"/>
</dbReference>
<dbReference type="InterPro" id="IPR002128">
    <property type="entry name" value="NADH_UbQ_OxRdtase_chlpt_su5_C"/>
</dbReference>
<dbReference type="InterPro" id="IPR018393">
    <property type="entry name" value="NADHpl_OxRdtase_5_subgr"/>
</dbReference>
<dbReference type="InterPro" id="IPR001750">
    <property type="entry name" value="ND/Mrp_TM"/>
</dbReference>
<dbReference type="InterPro" id="IPR003945">
    <property type="entry name" value="NU5C-like"/>
</dbReference>
<dbReference type="InterPro" id="IPR001516">
    <property type="entry name" value="Proton_antipo_N"/>
</dbReference>
<dbReference type="NCBIfam" id="TIGR01974">
    <property type="entry name" value="NDH_I_L"/>
    <property type="match status" value="1"/>
</dbReference>
<dbReference type="NCBIfam" id="NF005141">
    <property type="entry name" value="PRK06590.1"/>
    <property type="match status" value="1"/>
</dbReference>
<dbReference type="PANTHER" id="PTHR42829">
    <property type="entry name" value="NADH-UBIQUINONE OXIDOREDUCTASE CHAIN 5"/>
    <property type="match status" value="1"/>
</dbReference>
<dbReference type="PANTHER" id="PTHR42829:SF2">
    <property type="entry name" value="NADH-UBIQUINONE OXIDOREDUCTASE CHAIN 5"/>
    <property type="match status" value="1"/>
</dbReference>
<dbReference type="Pfam" id="PF01010">
    <property type="entry name" value="Proton_antipo_C"/>
    <property type="match status" value="1"/>
</dbReference>
<dbReference type="Pfam" id="PF00361">
    <property type="entry name" value="Proton_antipo_M"/>
    <property type="match status" value="1"/>
</dbReference>
<dbReference type="Pfam" id="PF00662">
    <property type="entry name" value="Proton_antipo_N"/>
    <property type="match status" value="1"/>
</dbReference>
<dbReference type="PRINTS" id="PR01434">
    <property type="entry name" value="NADHDHGNASE5"/>
</dbReference>
<dbReference type="PRINTS" id="PR01435">
    <property type="entry name" value="NPOXDRDTASE5"/>
</dbReference>
<protein>
    <recommendedName>
        <fullName>NAD(P)H-quinone oxidoreductase subunit 5, chloroplastic</fullName>
        <ecNumber>7.1.1.-</ecNumber>
    </recommendedName>
    <alternativeName>
        <fullName>NAD(P)H dehydrogenase subunit 5</fullName>
    </alternativeName>
    <alternativeName>
        <fullName>NADH-plastoquinone oxidoreductase subunit 5</fullName>
    </alternativeName>
</protein>
<keyword id="KW-0150">Chloroplast</keyword>
<keyword id="KW-0472">Membrane</keyword>
<keyword id="KW-0520">NAD</keyword>
<keyword id="KW-0521">NADP</keyword>
<keyword id="KW-0934">Plastid</keyword>
<keyword id="KW-0618">Plastoquinone</keyword>
<keyword id="KW-0874">Quinone</keyword>
<keyword id="KW-0793">Thylakoid</keyword>
<keyword id="KW-1278">Translocase</keyword>
<keyword id="KW-0812">Transmembrane</keyword>
<keyword id="KW-1133">Transmembrane helix</keyword>
<keyword id="KW-0813">Transport</keyword>
<reference key="1">
    <citation type="journal article" date="2007" name="Theor. Appl. Genet.">
        <title>Complete chloroplast genome sequences of Hordeum vulgare, Sorghum bicolor and Agrostis stolonifera, and comparative analyses with other grass genomes.</title>
        <authorList>
            <person name="Saski C."/>
            <person name="Lee S.-B."/>
            <person name="Fjellheim S."/>
            <person name="Guda C."/>
            <person name="Jansen R.K."/>
            <person name="Luo H."/>
            <person name="Tomkins J."/>
            <person name="Rognli O.A."/>
            <person name="Daniell H."/>
            <person name="Clarke J.L."/>
        </authorList>
    </citation>
    <scope>NUCLEOTIDE SEQUENCE [LARGE SCALE GENOMIC DNA]</scope>
    <source>
        <strain>cv. Penn A-4</strain>
    </source>
</reference>
<accession>A1EA56</accession>
<sequence length="739" mass="82746">MEHTYQYAWVIPLLPLPVIMSMGFGLFFIPTATKNLRRIWAFPSVLLLSIAMVFSVQLSIQQINGSSIYQYLWSWTVNNDFSLEFGYLIDPLTSIMLILITTVGILVLIYSDGYMSHDEGYLRFFVYISFFNTSMLGLVTSSNLIQIYFFWELVGMCSYLLIGFWFTRPLAASACQKAFVTNRVGDFGLLLGILGFFWITGSLEFRDLFKIANNWIPNNGINSLLTTLCAFLLFLGAVAKSAQFPLHVWLPDAMEGPTPISALIHAATMVAAGIFLLARLLPLFISLPLIMSLISLVGTITLFLGATLALAQRDIKRSLAYSTMSQLGYMMLALGIGSYQAALFHLITHAYSKALLFLGSGSIIHSMEPLVGYSPDKSQNMVLMGGLRKYIPITRSTFLWGTLSLCGIPPLACFWSKDEILSNSWLYSPFFGIIASFTAGLTAFYMFRIYLLTFDGYLRVHFQNYSSTKEGPLYSISLWGKRIPKGVNGDFVLSTTKSGVSFFSQNIPKMQGNTTNRIGCFSTSFGAKKTFAYPHETGNTMLFPLLILLLFTFFIGFIGISFDNGATDNGIAGLTILSKWLTPSINFTQESSNSSINSYEFITNAISSVSLAIFGLFIAYIFYGSAYSFFQNLDLQNSFYKESPKKAFFGKVKKKIYSWSYNRGYIDIFYTRVFTLGIRGLTELTEFFDKGVIDGITNGVGLVSFCIGEEIKYVGGGRISSYLFFFLCYVSIFLFFFLF</sequence>
<gene>
    <name type="primary">ndhF</name>
</gene>
<evidence type="ECO:0000250" key="1"/>
<evidence type="ECO:0000255" key="2"/>
<evidence type="ECO:0000305" key="3"/>
<geneLocation type="chloroplast"/>
<feature type="chain" id="PRO_0000360908" description="NAD(P)H-quinone oxidoreductase subunit 5, chloroplastic">
    <location>
        <begin position="1"/>
        <end position="739"/>
    </location>
</feature>
<feature type="transmembrane region" description="Helical" evidence="2">
    <location>
        <begin position="9"/>
        <end position="29"/>
    </location>
</feature>
<feature type="transmembrane region" description="Helical" evidence="2">
    <location>
        <begin position="39"/>
        <end position="59"/>
    </location>
</feature>
<feature type="transmembrane region" description="Helical" evidence="2">
    <location>
        <begin position="89"/>
        <end position="109"/>
    </location>
</feature>
<feature type="transmembrane region" description="Helical" evidence="2">
    <location>
        <begin position="125"/>
        <end position="145"/>
    </location>
</feature>
<feature type="transmembrane region" description="Helical" evidence="2">
    <location>
        <begin position="147"/>
        <end position="167"/>
    </location>
</feature>
<feature type="transmembrane region" description="Helical" evidence="2">
    <location>
        <begin position="185"/>
        <end position="205"/>
    </location>
</feature>
<feature type="transmembrane region" description="Helical" evidence="2">
    <location>
        <begin position="219"/>
        <end position="239"/>
    </location>
</feature>
<feature type="transmembrane region" description="Helical" evidence="2">
    <location>
        <begin position="258"/>
        <end position="278"/>
    </location>
</feature>
<feature type="transmembrane region" description="Helical" evidence="2">
    <location>
        <begin position="280"/>
        <end position="300"/>
    </location>
</feature>
<feature type="transmembrane region" description="Helical" evidence="2">
    <location>
        <begin position="327"/>
        <end position="347"/>
    </location>
</feature>
<feature type="transmembrane region" description="Helical" evidence="2">
    <location>
        <begin position="354"/>
        <end position="374"/>
    </location>
</feature>
<feature type="transmembrane region" description="Helical" evidence="2">
    <location>
        <begin position="396"/>
        <end position="416"/>
    </location>
</feature>
<feature type="transmembrane region" description="Helical" evidence="2">
    <location>
        <begin position="425"/>
        <end position="445"/>
    </location>
</feature>
<feature type="transmembrane region" description="Helical" evidence="2">
    <location>
        <begin position="542"/>
        <end position="562"/>
    </location>
</feature>
<feature type="transmembrane region" description="Helical" evidence="2">
    <location>
        <begin position="610"/>
        <end position="630"/>
    </location>
</feature>
<feature type="transmembrane region" description="Helical" evidence="2">
    <location>
        <begin position="719"/>
        <end position="739"/>
    </location>
</feature>
<comment type="function">
    <text evidence="1">NDH shuttles electrons from NAD(P)H:plastoquinone, via FMN and iron-sulfur (Fe-S) centers, to quinones in the photosynthetic chain and possibly in a chloroplast respiratory chain. The immediate electron acceptor for the enzyme in this species is believed to be plastoquinone. Couples the redox reaction to proton translocation, and thus conserves the redox energy in a proton gradient (By similarity).</text>
</comment>
<comment type="catalytic activity">
    <reaction>
        <text>a plastoquinone + NADH + (n+1) H(+)(in) = a plastoquinol + NAD(+) + n H(+)(out)</text>
        <dbReference type="Rhea" id="RHEA:42608"/>
        <dbReference type="Rhea" id="RHEA-COMP:9561"/>
        <dbReference type="Rhea" id="RHEA-COMP:9562"/>
        <dbReference type="ChEBI" id="CHEBI:15378"/>
        <dbReference type="ChEBI" id="CHEBI:17757"/>
        <dbReference type="ChEBI" id="CHEBI:57540"/>
        <dbReference type="ChEBI" id="CHEBI:57945"/>
        <dbReference type="ChEBI" id="CHEBI:62192"/>
    </reaction>
</comment>
<comment type="catalytic activity">
    <reaction>
        <text>a plastoquinone + NADPH + (n+1) H(+)(in) = a plastoquinol + NADP(+) + n H(+)(out)</text>
        <dbReference type="Rhea" id="RHEA:42612"/>
        <dbReference type="Rhea" id="RHEA-COMP:9561"/>
        <dbReference type="Rhea" id="RHEA-COMP:9562"/>
        <dbReference type="ChEBI" id="CHEBI:15378"/>
        <dbReference type="ChEBI" id="CHEBI:17757"/>
        <dbReference type="ChEBI" id="CHEBI:57783"/>
        <dbReference type="ChEBI" id="CHEBI:58349"/>
        <dbReference type="ChEBI" id="CHEBI:62192"/>
    </reaction>
</comment>
<comment type="subunit">
    <text evidence="1">NDH is composed of at least 16 different subunits, 5 of which are encoded in the nucleus.</text>
</comment>
<comment type="subcellular location">
    <subcellularLocation>
        <location evidence="1">Plastid</location>
        <location evidence="1">Chloroplast thylakoid membrane</location>
        <topology evidence="1">Multi-pass membrane protein</topology>
    </subcellularLocation>
</comment>
<comment type="similarity">
    <text evidence="3">Belongs to the complex I subunit 5 family.</text>
</comment>
<name>NU5C_AGRST</name>
<proteinExistence type="inferred from homology"/>